<organism>
    <name type="scientific">Geobacillus sp. (strain WCH70)</name>
    <dbReference type="NCBI Taxonomy" id="471223"/>
    <lineage>
        <taxon>Bacteria</taxon>
        <taxon>Bacillati</taxon>
        <taxon>Bacillota</taxon>
        <taxon>Bacilli</taxon>
        <taxon>Bacillales</taxon>
        <taxon>Anoxybacillaceae</taxon>
        <taxon>Geobacillus</taxon>
    </lineage>
</organism>
<comment type="function">
    <text evidence="1">Catalyzes the addition and repair of the essential 3'-terminal CCA sequence in tRNAs without using a nucleic acid template. Adds these three nucleotides in the order of C, C, and A to the tRNA nucleotide-73, using CTP and ATP as substrates and producing inorganic pyrophosphate. tRNA 3'-terminal CCA addition is required both for tRNA processing and repair. Also involved in tRNA surveillance by mediating tandem CCA addition to generate a CCACCA at the 3' terminus of unstable tRNAs. While stable tRNAs receive only 3'-terminal CCA, unstable tRNAs are marked with CCACCA and rapidly degraded.</text>
</comment>
<comment type="catalytic activity">
    <reaction evidence="1">
        <text>a tRNA precursor + 2 CTP + ATP = a tRNA with a 3' CCA end + 3 diphosphate</text>
        <dbReference type="Rhea" id="RHEA:14433"/>
        <dbReference type="Rhea" id="RHEA-COMP:10465"/>
        <dbReference type="Rhea" id="RHEA-COMP:10468"/>
        <dbReference type="ChEBI" id="CHEBI:30616"/>
        <dbReference type="ChEBI" id="CHEBI:33019"/>
        <dbReference type="ChEBI" id="CHEBI:37563"/>
        <dbReference type="ChEBI" id="CHEBI:74896"/>
        <dbReference type="ChEBI" id="CHEBI:83071"/>
        <dbReference type="EC" id="2.7.7.72"/>
    </reaction>
</comment>
<comment type="catalytic activity">
    <reaction evidence="1">
        <text>a tRNA with a 3' CCA end + 2 CTP + ATP = a tRNA with a 3' CCACCA end + 3 diphosphate</text>
        <dbReference type="Rhea" id="RHEA:76235"/>
        <dbReference type="Rhea" id="RHEA-COMP:10468"/>
        <dbReference type="Rhea" id="RHEA-COMP:18655"/>
        <dbReference type="ChEBI" id="CHEBI:30616"/>
        <dbReference type="ChEBI" id="CHEBI:33019"/>
        <dbReference type="ChEBI" id="CHEBI:37563"/>
        <dbReference type="ChEBI" id="CHEBI:83071"/>
        <dbReference type="ChEBI" id="CHEBI:195187"/>
    </reaction>
    <physiologicalReaction direction="left-to-right" evidence="1">
        <dbReference type="Rhea" id="RHEA:76236"/>
    </physiologicalReaction>
</comment>
<comment type="cofactor">
    <cofactor evidence="1">
        <name>Mg(2+)</name>
        <dbReference type="ChEBI" id="CHEBI:18420"/>
    </cofactor>
</comment>
<comment type="subunit">
    <text evidence="1">Homodimer.</text>
</comment>
<comment type="miscellaneous">
    <text evidence="1">A single active site specifically recognizes both ATP and CTP and is responsible for their addition.</text>
</comment>
<comment type="similarity">
    <text evidence="1">Belongs to the tRNA nucleotidyltransferase/poly(A) polymerase family. Bacterial CCA-adding enzyme type 3 subfamily.</text>
</comment>
<dbReference type="EC" id="2.7.7.72" evidence="1"/>
<dbReference type="EMBL" id="CP001638">
    <property type="protein sequence ID" value="ACS24830.1"/>
    <property type="molecule type" value="Genomic_DNA"/>
</dbReference>
<dbReference type="SMR" id="C5D3B5"/>
<dbReference type="STRING" id="471223.GWCH70_2120"/>
<dbReference type="KEGG" id="gwc:GWCH70_2120"/>
<dbReference type="eggNOG" id="COG0617">
    <property type="taxonomic scope" value="Bacteria"/>
</dbReference>
<dbReference type="HOGENOM" id="CLU_015961_3_0_9"/>
<dbReference type="OrthoDB" id="9805698at2"/>
<dbReference type="GO" id="GO:0005524">
    <property type="term" value="F:ATP binding"/>
    <property type="evidence" value="ECO:0007669"/>
    <property type="project" value="UniProtKB-UniRule"/>
</dbReference>
<dbReference type="GO" id="GO:0004810">
    <property type="term" value="F:CCA tRNA nucleotidyltransferase activity"/>
    <property type="evidence" value="ECO:0007669"/>
    <property type="project" value="UniProtKB-UniRule"/>
</dbReference>
<dbReference type="GO" id="GO:0000287">
    <property type="term" value="F:magnesium ion binding"/>
    <property type="evidence" value="ECO:0007669"/>
    <property type="project" value="UniProtKB-UniRule"/>
</dbReference>
<dbReference type="GO" id="GO:0000049">
    <property type="term" value="F:tRNA binding"/>
    <property type="evidence" value="ECO:0007669"/>
    <property type="project" value="UniProtKB-UniRule"/>
</dbReference>
<dbReference type="GO" id="GO:0042245">
    <property type="term" value="P:RNA repair"/>
    <property type="evidence" value="ECO:0007669"/>
    <property type="project" value="UniProtKB-KW"/>
</dbReference>
<dbReference type="GO" id="GO:0001680">
    <property type="term" value="P:tRNA 3'-terminal CCA addition"/>
    <property type="evidence" value="ECO:0007669"/>
    <property type="project" value="UniProtKB-UniRule"/>
</dbReference>
<dbReference type="CDD" id="cd05398">
    <property type="entry name" value="NT_ClassII-CCAase"/>
    <property type="match status" value="1"/>
</dbReference>
<dbReference type="Gene3D" id="1.10.110.30">
    <property type="match status" value="1"/>
</dbReference>
<dbReference type="Gene3D" id="1.10.246.80">
    <property type="match status" value="1"/>
</dbReference>
<dbReference type="Gene3D" id="1.20.58.560">
    <property type="match status" value="1"/>
</dbReference>
<dbReference type="Gene3D" id="3.30.460.10">
    <property type="entry name" value="Beta Polymerase, domain 2"/>
    <property type="match status" value="1"/>
</dbReference>
<dbReference type="HAMAP" id="MF_01263">
    <property type="entry name" value="CCA_bact_type3"/>
    <property type="match status" value="1"/>
</dbReference>
<dbReference type="InterPro" id="IPR050264">
    <property type="entry name" value="Bact_CCA-adding_enz_type3_sf"/>
</dbReference>
<dbReference type="InterPro" id="IPR032810">
    <property type="entry name" value="CCA-adding_enz_C"/>
</dbReference>
<dbReference type="InterPro" id="IPR023068">
    <property type="entry name" value="CCA-adding_enz_firmicutes"/>
</dbReference>
<dbReference type="InterPro" id="IPR043519">
    <property type="entry name" value="NT_sf"/>
</dbReference>
<dbReference type="InterPro" id="IPR002646">
    <property type="entry name" value="PolA_pol_head_dom"/>
</dbReference>
<dbReference type="InterPro" id="IPR032828">
    <property type="entry name" value="PolyA_RNA-bd"/>
</dbReference>
<dbReference type="NCBIfam" id="NF009814">
    <property type="entry name" value="PRK13299.1"/>
    <property type="match status" value="1"/>
</dbReference>
<dbReference type="PANTHER" id="PTHR46173">
    <property type="entry name" value="CCA TRNA NUCLEOTIDYLTRANSFERASE 1, MITOCHONDRIAL"/>
    <property type="match status" value="1"/>
</dbReference>
<dbReference type="PANTHER" id="PTHR46173:SF1">
    <property type="entry name" value="CCA TRNA NUCLEOTIDYLTRANSFERASE 1, MITOCHONDRIAL"/>
    <property type="match status" value="1"/>
</dbReference>
<dbReference type="Pfam" id="PF01743">
    <property type="entry name" value="PolyA_pol"/>
    <property type="match status" value="1"/>
</dbReference>
<dbReference type="Pfam" id="PF12627">
    <property type="entry name" value="PolyA_pol_RNAbd"/>
    <property type="match status" value="1"/>
</dbReference>
<dbReference type="Pfam" id="PF13735">
    <property type="entry name" value="tRNA_NucTran2_2"/>
    <property type="match status" value="1"/>
</dbReference>
<dbReference type="SUPFAM" id="SSF81301">
    <property type="entry name" value="Nucleotidyltransferase"/>
    <property type="match status" value="1"/>
</dbReference>
<dbReference type="SUPFAM" id="SSF81891">
    <property type="entry name" value="Poly A polymerase C-terminal region-like"/>
    <property type="match status" value="1"/>
</dbReference>
<sequence length="404" mass="46099">MKEPFQKALGIIQTLQQHGYEAYFVGGAVRDLLLNREIGDIDIATSALPDEVMQLFPKTIDIGSQHGTVVVVHNGISYEVTTFRTESEYEDYRRPGAVTFVRSLYEDLQRRDFTMNAIAMDAEGKLIDPFGGQEAIANRIICTVGDPKARFSEDALRMMRAIRFVGQLGFSLDEETKQAIIENAALLAHISVERMTMEFEKLLEGPFASRALSLLVETGLFLYLPMLRDKENELQAAARYNWRLLDSRGQRWGFLCYILCIDSAADFLRAWKLPNRLIKEVEMALRILQTIPSSSDWTKERLFEFGLEHAIAAETIRSVASGENVEEHRKKLNELFMSLPIKTKKELAVSGNDIMKWFGKPGGPWVKEILTLIERAVIHGEVDNHKERIHEWLIHRNLIRGENC</sequence>
<protein>
    <recommendedName>
        <fullName evidence="1">CCA-adding enzyme</fullName>
        <ecNumber evidence="1">2.7.7.72</ecNumber>
    </recommendedName>
    <alternativeName>
        <fullName evidence="1">CCA tRNA nucleotidyltransferase</fullName>
    </alternativeName>
    <alternativeName>
        <fullName evidence="1">tRNA CCA-pyrophosphorylase</fullName>
    </alternativeName>
    <alternativeName>
        <fullName evidence="1">tRNA adenylyl-/cytidylyl- transferase</fullName>
    </alternativeName>
    <alternativeName>
        <fullName evidence="1">tRNA nucleotidyltransferase</fullName>
    </alternativeName>
    <alternativeName>
        <fullName evidence="1">tRNA-NT</fullName>
    </alternativeName>
</protein>
<accession>C5D3B5</accession>
<gene>
    <name evidence="1" type="primary">cca</name>
    <name type="ordered locus">GWCH70_2120</name>
</gene>
<evidence type="ECO:0000255" key="1">
    <source>
        <dbReference type="HAMAP-Rule" id="MF_01263"/>
    </source>
</evidence>
<proteinExistence type="inferred from homology"/>
<feature type="chain" id="PRO_1000214138" description="CCA-adding enzyme">
    <location>
        <begin position="1"/>
        <end position="404"/>
    </location>
</feature>
<feature type="binding site" evidence="1">
    <location>
        <position position="27"/>
    </location>
    <ligand>
        <name>ATP</name>
        <dbReference type="ChEBI" id="CHEBI:30616"/>
    </ligand>
</feature>
<feature type="binding site" evidence="1">
    <location>
        <position position="27"/>
    </location>
    <ligand>
        <name>CTP</name>
        <dbReference type="ChEBI" id="CHEBI:37563"/>
    </ligand>
</feature>
<feature type="binding site" evidence="1">
    <location>
        <position position="30"/>
    </location>
    <ligand>
        <name>ATP</name>
        <dbReference type="ChEBI" id="CHEBI:30616"/>
    </ligand>
</feature>
<feature type="binding site" evidence="1">
    <location>
        <position position="30"/>
    </location>
    <ligand>
        <name>CTP</name>
        <dbReference type="ChEBI" id="CHEBI:37563"/>
    </ligand>
</feature>
<feature type="binding site" evidence="1">
    <location>
        <position position="40"/>
    </location>
    <ligand>
        <name>Mg(2+)</name>
        <dbReference type="ChEBI" id="CHEBI:18420"/>
    </ligand>
</feature>
<feature type="binding site" evidence="1">
    <location>
        <position position="42"/>
    </location>
    <ligand>
        <name>Mg(2+)</name>
        <dbReference type="ChEBI" id="CHEBI:18420"/>
    </ligand>
</feature>
<feature type="binding site" evidence="1">
    <location>
        <position position="111"/>
    </location>
    <ligand>
        <name>ATP</name>
        <dbReference type="ChEBI" id="CHEBI:30616"/>
    </ligand>
</feature>
<feature type="binding site" evidence="1">
    <location>
        <position position="111"/>
    </location>
    <ligand>
        <name>CTP</name>
        <dbReference type="ChEBI" id="CHEBI:37563"/>
    </ligand>
</feature>
<feature type="binding site" evidence="1">
    <location>
        <position position="154"/>
    </location>
    <ligand>
        <name>ATP</name>
        <dbReference type="ChEBI" id="CHEBI:30616"/>
    </ligand>
</feature>
<feature type="binding site" evidence="1">
    <location>
        <position position="154"/>
    </location>
    <ligand>
        <name>CTP</name>
        <dbReference type="ChEBI" id="CHEBI:37563"/>
    </ligand>
</feature>
<feature type="binding site" evidence="1">
    <location>
        <position position="157"/>
    </location>
    <ligand>
        <name>ATP</name>
        <dbReference type="ChEBI" id="CHEBI:30616"/>
    </ligand>
</feature>
<feature type="binding site" evidence="1">
    <location>
        <position position="157"/>
    </location>
    <ligand>
        <name>CTP</name>
        <dbReference type="ChEBI" id="CHEBI:37563"/>
    </ligand>
</feature>
<feature type="binding site" evidence="1">
    <location>
        <position position="160"/>
    </location>
    <ligand>
        <name>ATP</name>
        <dbReference type="ChEBI" id="CHEBI:30616"/>
    </ligand>
</feature>
<feature type="binding site" evidence="1">
    <location>
        <position position="160"/>
    </location>
    <ligand>
        <name>CTP</name>
        <dbReference type="ChEBI" id="CHEBI:37563"/>
    </ligand>
</feature>
<feature type="binding site" evidence="1">
    <location>
        <position position="163"/>
    </location>
    <ligand>
        <name>ATP</name>
        <dbReference type="ChEBI" id="CHEBI:30616"/>
    </ligand>
</feature>
<feature type="binding site" evidence="1">
    <location>
        <position position="163"/>
    </location>
    <ligand>
        <name>CTP</name>
        <dbReference type="ChEBI" id="CHEBI:37563"/>
    </ligand>
</feature>
<reference key="1">
    <citation type="submission" date="2009-06" db="EMBL/GenBank/DDBJ databases">
        <title>Complete sequence of chromosome of Geopacillus sp. WCH70.</title>
        <authorList>
            <consortium name="US DOE Joint Genome Institute"/>
            <person name="Lucas S."/>
            <person name="Copeland A."/>
            <person name="Lapidus A."/>
            <person name="Glavina del Rio T."/>
            <person name="Dalin E."/>
            <person name="Tice H."/>
            <person name="Bruce D."/>
            <person name="Goodwin L."/>
            <person name="Pitluck S."/>
            <person name="Chertkov O."/>
            <person name="Brettin T."/>
            <person name="Detter J.C."/>
            <person name="Han C."/>
            <person name="Larimer F."/>
            <person name="Land M."/>
            <person name="Hauser L."/>
            <person name="Kyrpides N."/>
            <person name="Mikhailova N."/>
            <person name="Brumm P."/>
            <person name="Mead D.A."/>
            <person name="Richardson P."/>
        </authorList>
    </citation>
    <scope>NUCLEOTIDE SEQUENCE [LARGE SCALE GENOMIC DNA]</scope>
    <source>
        <strain>WCH70</strain>
    </source>
</reference>
<keyword id="KW-0067">ATP-binding</keyword>
<keyword id="KW-0460">Magnesium</keyword>
<keyword id="KW-0479">Metal-binding</keyword>
<keyword id="KW-0547">Nucleotide-binding</keyword>
<keyword id="KW-0548">Nucleotidyltransferase</keyword>
<keyword id="KW-0692">RNA repair</keyword>
<keyword id="KW-0694">RNA-binding</keyword>
<keyword id="KW-0808">Transferase</keyword>
<keyword id="KW-0819">tRNA processing</keyword>
<name>CCA_GEOSW</name>